<gene>
    <name evidence="1" type="primary">ndhD</name>
    <name type="ordered locus">GuabCp077</name>
</gene>
<protein>
    <recommendedName>
        <fullName evidence="1">NAD(P)H-quinone oxidoreductase chain 4, chloroplastic</fullName>
        <ecNumber evidence="1">7.1.1.-</ecNumber>
    </recommendedName>
    <alternativeName>
        <fullName evidence="1">NAD(P)H dehydrogenase, chain 4</fullName>
    </alternativeName>
    <alternativeName>
        <fullName evidence="1">NADH-plastoquinone oxidoreductase chain 4</fullName>
    </alternativeName>
</protein>
<organism>
    <name type="scientific">Guizotia abyssinica</name>
    <name type="common">Niger</name>
    <name type="synonym">Ramtilla</name>
    <dbReference type="NCBI Taxonomy" id="4230"/>
    <lineage>
        <taxon>Eukaryota</taxon>
        <taxon>Viridiplantae</taxon>
        <taxon>Streptophyta</taxon>
        <taxon>Embryophyta</taxon>
        <taxon>Tracheophyta</taxon>
        <taxon>Spermatophyta</taxon>
        <taxon>Magnoliopsida</taxon>
        <taxon>eudicotyledons</taxon>
        <taxon>Gunneridae</taxon>
        <taxon>Pentapetalae</taxon>
        <taxon>asterids</taxon>
        <taxon>campanulids</taxon>
        <taxon>Asterales</taxon>
        <taxon>Asteraceae</taxon>
        <taxon>Asteroideae</taxon>
        <taxon>Heliantheae alliance</taxon>
        <taxon>Millerieae</taxon>
        <taxon>Guizotia</taxon>
    </lineage>
</organism>
<geneLocation type="chloroplast"/>
<name>NU4C_GUIAB</name>
<accession>B2LMP8</accession>
<sequence length="500" mass="56216">MNKFPWLTIIVVLPIFAGSFIFFLPHKGNRVIRWYTICICTLELLLTTYAFCYHFRLDDPLIQLVEDYKWINFFDFRWKLGIDGLSIGPVLLTGFITTLATLAAWPVTRDSRLFHFLMLAMYSGQIGSFSSRDLLLFFIMWELELIPVYLLLSMWGGKKRLYSATKFILYTAGGSIFLLMGVLGVGLYGSNEPTLNFETSVNQSYPVALEIIFYIGFFIAFAVKLPILPLHTWLPDTHGEAHYSTCMLLAGILLKMGAYGLIRINMELLPHAHSIFSPWLMIVGTIQIIYAASTSLGQRNLKKRIAYSSVSHMGFILIGIASITDTGLNGAILQIISHGFIGAALFFLAGTSYDRIRLVYLDEMGGVAIPMPKIFTMFSSFSISSLALPGMSGFVAEVIVFLGIITSQKYLLMPKIVITFVMAIGMILTPIYLLSMSRQMFYGYKLFNIPNSFVFDSGPRELFVSISIFLPVIGIGMYPDFVLSLSVDKVEGILSNYFYR</sequence>
<comment type="catalytic activity">
    <reaction evidence="1">
        <text>a plastoquinone + NADH + (n+1) H(+)(in) = a plastoquinol + NAD(+) + n H(+)(out)</text>
        <dbReference type="Rhea" id="RHEA:42608"/>
        <dbReference type="Rhea" id="RHEA-COMP:9561"/>
        <dbReference type="Rhea" id="RHEA-COMP:9562"/>
        <dbReference type="ChEBI" id="CHEBI:15378"/>
        <dbReference type="ChEBI" id="CHEBI:17757"/>
        <dbReference type="ChEBI" id="CHEBI:57540"/>
        <dbReference type="ChEBI" id="CHEBI:57945"/>
        <dbReference type="ChEBI" id="CHEBI:62192"/>
    </reaction>
</comment>
<comment type="catalytic activity">
    <reaction evidence="1">
        <text>a plastoquinone + NADPH + (n+1) H(+)(in) = a plastoquinol + NADP(+) + n H(+)(out)</text>
        <dbReference type="Rhea" id="RHEA:42612"/>
        <dbReference type="Rhea" id="RHEA-COMP:9561"/>
        <dbReference type="Rhea" id="RHEA-COMP:9562"/>
        <dbReference type="ChEBI" id="CHEBI:15378"/>
        <dbReference type="ChEBI" id="CHEBI:17757"/>
        <dbReference type="ChEBI" id="CHEBI:57783"/>
        <dbReference type="ChEBI" id="CHEBI:58349"/>
        <dbReference type="ChEBI" id="CHEBI:62192"/>
    </reaction>
</comment>
<comment type="subcellular location">
    <subcellularLocation>
        <location evidence="1">Plastid</location>
        <location evidence="1">Chloroplast thylakoid membrane</location>
        <topology evidence="1">Multi-pass membrane protein</topology>
    </subcellularLocation>
</comment>
<comment type="similarity">
    <text evidence="1">Belongs to the complex I subunit 4 family.</text>
</comment>
<keyword id="KW-0150">Chloroplast</keyword>
<keyword id="KW-0472">Membrane</keyword>
<keyword id="KW-0520">NAD</keyword>
<keyword id="KW-0521">NADP</keyword>
<keyword id="KW-0934">Plastid</keyword>
<keyword id="KW-0618">Plastoquinone</keyword>
<keyword id="KW-0874">Quinone</keyword>
<keyword id="KW-0793">Thylakoid</keyword>
<keyword id="KW-1278">Translocase</keyword>
<keyword id="KW-0812">Transmembrane</keyword>
<keyword id="KW-1133">Transmembrane helix</keyword>
<evidence type="ECO:0000255" key="1">
    <source>
        <dbReference type="HAMAP-Rule" id="MF_00491"/>
    </source>
</evidence>
<dbReference type="EC" id="7.1.1.-" evidence="1"/>
<dbReference type="EMBL" id="EU549769">
    <property type="protein sequence ID" value="ACB86581.1"/>
    <property type="molecule type" value="Genomic_DNA"/>
</dbReference>
<dbReference type="RefSeq" id="YP_001837415.1">
    <property type="nucleotide sequence ID" value="NC_010601.1"/>
</dbReference>
<dbReference type="SMR" id="B2LMP8"/>
<dbReference type="GeneID" id="6219165"/>
<dbReference type="GO" id="GO:0009535">
    <property type="term" value="C:chloroplast thylakoid membrane"/>
    <property type="evidence" value="ECO:0007669"/>
    <property type="project" value="UniProtKB-SubCell"/>
</dbReference>
<dbReference type="GO" id="GO:0008137">
    <property type="term" value="F:NADH dehydrogenase (ubiquinone) activity"/>
    <property type="evidence" value="ECO:0007669"/>
    <property type="project" value="InterPro"/>
</dbReference>
<dbReference type="GO" id="GO:0048039">
    <property type="term" value="F:ubiquinone binding"/>
    <property type="evidence" value="ECO:0007669"/>
    <property type="project" value="TreeGrafter"/>
</dbReference>
<dbReference type="GO" id="GO:0042773">
    <property type="term" value="P:ATP synthesis coupled electron transport"/>
    <property type="evidence" value="ECO:0007669"/>
    <property type="project" value="InterPro"/>
</dbReference>
<dbReference type="GO" id="GO:0015990">
    <property type="term" value="P:electron transport coupled proton transport"/>
    <property type="evidence" value="ECO:0007669"/>
    <property type="project" value="TreeGrafter"/>
</dbReference>
<dbReference type="HAMAP" id="MF_00491">
    <property type="entry name" value="NDH1_NuoM"/>
    <property type="match status" value="1"/>
</dbReference>
<dbReference type="InterPro" id="IPR022997">
    <property type="entry name" value="NADH_Q_OxRdtase_chain4"/>
</dbReference>
<dbReference type="InterPro" id="IPR010227">
    <property type="entry name" value="NADH_Q_OxRdtase_chainM/4"/>
</dbReference>
<dbReference type="InterPro" id="IPR003918">
    <property type="entry name" value="NADH_UbQ_OxRdtase"/>
</dbReference>
<dbReference type="InterPro" id="IPR001750">
    <property type="entry name" value="ND/Mrp_TM"/>
</dbReference>
<dbReference type="NCBIfam" id="TIGR01972">
    <property type="entry name" value="NDH_I_M"/>
    <property type="match status" value="1"/>
</dbReference>
<dbReference type="PANTHER" id="PTHR43507:SF21">
    <property type="entry name" value="NAD(P)H-QUINONE OXIDOREDUCTASE CHAIN 4, CHLOROPLASTIC"/>
    <property type="match status" value="1"/>
</dbReference>
<dbReference type="PANTHER" id="PTHR43507">
    <property type="entry name" value="NADH-UBIQUINONE OXIDOREDUCTASE CHAIN 4"/>
    <property type="match status" value="1"/>
</dbReference>
<dbReference type="Pfam" id="PF00361">
    <property type="entry name" value="Proton_antipo_M"/>
    <property type="match status" value="1"/>
</dbReference>
<dbReference type="PRINTS" id="PR01437">
    <property type="entry name" value="NUOXDRDTASE4"/>
</dbReference>
<reference key="1">
    <citation type="submission" date="2008-03" db="EMBL/GenBank/DDBJ databases">
        <title>Guizotia abyssinica chloroplast sequenced using Solexa.</title>
        <authorList>
            <person name="Kane N.C."/>
            <person name="Dempewolf H."/>
            <person name="Stewart M.L."/>
            <person name="Cronk Q."/>
            <person name="Rieseberrg L.H."/>
        </authorList>
    </citation>
    <scope>NUCLEOTIDE SEQUENCE [LARGE SCALE GENOMIC DNA]</scope>
    <source>
        <strain>cv. PI 508077</strain>
    </source>
</reference>
<feature type="chain" id="PRO_0000343285" description="NAD(P)H-quinone oxidoreductase chain 4, chloroplastic">
    <location>
        <begin position="1"/>
        <end position="500"/>
    </location>
</feature>
<feature type="transmembrane region" description="Helical" evidence="1">
    <location>
        <begin position="4"/>
        <end position="24"/>
    </location>
</feature>
<feature type="transmembrane region" description="Helical" evidence="1">
    <location>
        <begin position="35"/>
        <end position="55"/>
    </location>
</feature>
<feature type="transmembrane region" description="Helical" evidence="1">
    <location>
        <begin position="87"/>
        <end position="107"/>
    </location>
</feature>
<feature type="transmembrane region" description="Helical" evidence="1">
    <location>
        <begin position="113"/>
        <end position="130"/>
    </location>
</feature>
<feature type="transmembrane region" description="Helical" evidence="1">
    <location>
        <begin position="134"/>
        <end position="154"/>
    </location>
</feature>
<feature type="transmembrane region" description="Helical" evidence="1">
    <location>
        <begin position="167"/>
        <end position="187"/>
    </location>
</feature>
<feature type="transmembrane region" description="Helical" evidence="1">
    <location>
        <begin position="207"/>
        <end position="227"/>
    </location>
</feature>
<feature type="transmembrane region" description="Helical" evidence="1">
    <location>
        <begin position="242"/>
        <end position="262"/>
    </location>
</feature>
<feature type="transmembrane region" description="Helical" evidence="1">
    <location>
        <begin position="272"/>
        <end position="292"/>
    </location>
</feature>
<feature type="transmembrane region" description="Helical" evidence="1">
    <location>
        <begin position="305"/>
        <end position="325"/>
    </location>
</feature>
<feature type="transmembrane region" description="Helical" evidence="1">
    <location>
        <begin position="330"/>
        <end position="350"/>
    </location>
</feature>
<feature type="transmembrane region" description="Helical" evidence="1">
    <location>
        <begin position="386"/>
        <end position="406"/>
    </location>
</feature>
<feature type="transmembrane region" description="Helical" evidence="1">
    <location>
        <begin position="416"/>
        <end position="436"/>
    </location>
</feature>
<feature type="transmembrane region" description="Helical" evidence="1">
    <location>
        <begin position="462"/>
        <end position="482"/>
    </location>
</feature>
<proteinExistence type="inferred from homology"/>